<gene>
    <name evidence="1" type="primary">mtnC</name>
    <name type="ordered locus">SynRCC307_0448</name>
</gene>
<dbReference type="EC" id="3.1.3.77" evidence="1"/>
<dbReference type="EMBL" id="CT978603">
    <property type="protein sequence ID" value="CAK27351.1"/>
    <property type="molecule type" value="Genomic_DNA"/>
</dbReference>
<dbReference type="SMR" id="A5GR42"/>
<dbReference type="STRING" id="316278.SynRCC307_0448"/>
<dbReference type="KEGG" id="syr:SynRCC307_0448"/>
<dbReference type="eggNOG" id="COG4229">
    <property type="taxonomic scope" value="Bacteria"/>
</dbReference>
<dbReference type="HOGENOM" id="CLU_023273_0_0_3"/>
<dbReference type="UniPathway" id="UPA00904">
    <property type="reaction ID" value="UER00876"/>
</dbReference>
<dbReference type="UniPathway" id="UPA00904">
    <property type="reaction ID" value="UER00877"/>
</dbReference>
<dbReference type="Proteomes" id="UP000001115">
    <property type="component" value="Chromosome"/>
</dbReference>
<dbReference type="GO" id="GO:0043715">
    <property type="term" value="F:2,3-diketo-5-methylthiopentyl-1-phosphate enolase activity"/>
    <property type="evidence" value="ECO:0007669"/>
    <property type="project" value="UniProtKB-UniRule"/>
</dbReference>
<dbReference type="GO" id="GO:0043716">
    <property type="term" value="F:2-hydroxy-3-keto-5-methylthiopentenyl-1-phosphate phosphatase activity"/>
    <property type="evidence" value="ECO:0007669"/>
    <property type="project" value="UniProtKB-UniRule"/>
</dbReference>
<dbReference type="GO" id="GO:0043874">
    <property type="term" value="F:acireductone synthase activity"/>
    <property type="evidence" value="ECO:0007669"/>
    <property type="project" value="UniProtKB-EC"/>
</dbReference>
<dbReference type="GO" id="GO:0000287">
    <property type="term" value="F:magnesium ion binding"/>
    <property type="evidence" value="ECO:0007669"/>
    <property type="project" value="UniProtKB-UniRule"/>
</dbReference>
<dbReference type="GO" id="GO:0019509">
    <property type="term" value="P:L-methionine salvage from methylthioadenosine"/>
    <property type="evidence" value="ECO:0007669"/>
    <property type="project" value="UniProtKB-UniRule"/>
</dbReference>
<dbReference type="CDD" id="cd01629">
    <property type="entry name" value="HAD_EP"/>
    <property type="match status" value="1"/>
</dbReference>
<dbReference type="Gene3D" id="1.10.720.60">
    <property type="match status" value="1"/>
</dbReference>
<dbReference type="Gene3D" id="3.40.50.1000">
    <property type="entry name" value="HAD superfamily/HAD-like"/>
    <property type="match status" value="1"/>
</dbReference>
<dbReference type="HAMAP" id="MF_01681">
    <property type="entry name" value="Salvage_MtnC"/>
    <property type="match status" value="1"/>
</dbReference>
<dbReference type="InterPro" id="IPR023943">
    <property type="entry name" value="Enolase-ppase_E1"/>
</dbReference>
<dbReference type="InterPro" id="IPR036412">
    <property type="entry name" value="HAD-like_sf"/>
</dbReference>
<dbReference type="InterPro" id="IPR023214">
    <property type="entry name" value="HAD_sf"/>
</dbReference>
<dbReference type="NCBIfam" id="TIGR01691">
    <property type="entry name" value="enolase-ppase"/>
    <property type="match status" value="1"/>
</dbReference>
<dbReference type="PANTHER" id="PTHR20371">
    <property type="entry name" value="ENOLASE-PHOSPHATASE E1"/>
    <property type="match status" value="1"/>
</dbReference>
<dbReference type="PANTHER" id="PTHR20371:SF1">
    <property type="entry name" value="ENOLASE-PHOSPHATASE E1"/>
    <property type="match status" value="1"/>
</dbReference>
<dbReference type="Pfam" id="PF00702">
    <property type="entry name" value="Hydrolase"/>
    <property type="match status" value="1"/>
</dbReference>
<dbReference type="SFLD" id="SFLDF00044">
    <property type="entry name" value="enolase-phosphatase"/>
    <property type="match status" value="1"/>
</dbReference>
<dbReference type="SFLD" id="SFLDS00003">
    <property type="entry name" value="Haloacid_Dehalogenase"/>
    <property type="match status" value="1"/>
</dbReference>
<dbReference type="SUPFAM" id="SSF56784">
    <property type="entry name" value="HAD-like"/>
    <property type="match status" value="1"/>
</dbReference>
<name>MTNC_SYNR3</name>
<feature type="chain" id="PRO_0000357423" description="Enolase-phosphatase E1">
    <location>
        <begin position="1"/>
        <end position="249"/>
    </location>
</feature>
<accession>A5GR42</accession>
<reference key="1">
    <citation type="submission" date="2006-05" db="EMBL/GenBank/DDBJ databases">
        <authorList>
            <consortium name="Genoscope"/>
        </authorList>
    </citation>
    <scope>NUCLEOTIDE SEQUENCE [LARGE SCALE GENOMIC DNA]</scope>
    <source>
        <strain>RCC307</strain>
    </source>
</reference>
<protein>
    <recommendedName>
        <fullName evidence="1">Enolase-phosphatase E1</fullName>
        <ecNumber evidence="1">3.1.3.77</ecNumber>
    </recommendedName>
    <alternativeName>
        <fullName evidence="1">2,3-diketo-5-methylthio-1-phosphopentane phosphatase</fullName>
    </alternativeName>
</protein>
<evidence type="ECO:0000255" key="1">
    <source>
        <dbReference type="HAMAP-Rule" id="MF_01681"/>
    </source>
</evidence>
<keyword id="KW-0028">Amino-acid biosynthesis</keyword>
<keyword id="KW-0378">Hydrolase</keyword>
<keyword id="KW-0460">Magnesium</keyword>
<keyword id="KW-0479">Metal-binding</keyword>
<keyword id="KW-0486">Methionine biosynthesis</keyword>
<keyword id="KW-1185">Reference proteome</keyword>
<proteinExistence type="inferred from homology"/>
<comment type="function">
    <text evidence="1">Bifunctional enzyme that catalyzes the enolization of 2,3-diketo-5-methylthiopentyl-1-phosphate (DK-MTP-1-P) into the intermediate 2-hydroxy-3-keto-5-methylthiopentenyl-1-phosphate (HK-MTPenyl-1-P), which is then dephosphorylated to form the acireductone 1,2-dihydroxy-3-keto-5-methylthiopentene (DHK-MTPene).</text>
</comment>
<comment type="catalytic activity">
    <reaction evidence="1">
        <text>5-methylsulfanyl-2,3-dioxopentyl phosphate + H2O = 1,2-dihydroxy-5-(methylsulfanyl)pent-1-en-3-one + phosphate</text>
        <dbReference type="Rhea" id="RHEA:21700"/>
        <dbReference type="ChEBI" id="CHEBI:15377"/>
        <dbReference type="ChEBI" id="CHEBI:43474"/>
        <dbReference type="ChEBI" id="CHEBI:49252"/>
        <dbReference type="ChEBI" id="CHEBI:58828"/>
        <dbReference type="EC" id="3.1.3.77"/>
    </reaction>
</comment>
<comment type="cofactor">
    <cofactor evidence="1">
        <name>Mg(2+)</name>
        <dbReference type="ChEBI" id="CHEBI:18420"/>
    </cofactor>
    <text evidence="1">Binds 1 Mg(2+) ion per subunit.</text>
</comment>
<comment type="pathway">
    <text evidence="1">Amino-acid biosynthesis; L-methionine biosynthesis via salvage pathway; L-methionine from S-methyl-5-thio-alpha-D-ribose 1-phosphate: step 3/6.</text>
</comment>
<comment type="pathway">
    <text evidence="1">Amino-acid biosynthesis; L-methionine biosynthesis via salvage pathway; L-methionine from S-methyl-5-thio-alpha-D-ribose 1-phosphate: step 4/6.</text>
</comment>
<comment type="subunit">
    <text evidence="1">Monomer.</text>
</comment>
<comment type="similarity">
    <text evidence="1">Belongs to the HAD-like hydrolase superfamily. MasA/MtnC family.</text>
</comment>
<organism>
    <name type="scientific">Synechococcus sp. (strain RCC307)</name>
    <dbReference type="NCBI Taxonomy" id="316278"/>
    <lineage>
        <taxon>Bacteria</taxon>
        <taxon>Bacillati</taxon>
        <taxon>Cyanobacteriota</taxon>
        <taxon>Cyanophyceae</taxon>
        <taxon>Synechococcales</taxon>
        <taxon>Synechococcaceae</taxon>
        <taxon>Synechococcus</taxon>
    </lineage>
</organism>
<sequence>MIDWESLRAIVLDIEGTTCPVDFVTGSLFPYARQHLGTLLSQDDQQAPLKPLLDEVRIAWKHENSAEAPAYSDSQDPLALLPYLQWLIDQDRKLAPLKELQGLTWRHGYQSGALTTPLFADVAPALKRWQQRGLRLAVYSSGSVAAQQLFYGHTSDGDLSDLFERWYDTRLGPKNEAQSYTLLAADLQLPAHAVLFISDSSGELAAAQAAGLQICGSQRPGNPETLSAKWPVVVSSLEALAPSGPPGLR</sequence>